<gene>
    <name evidence="1" type="primary">rplO</name>
    <name type="ordered locus">Avin_06440</name>
</gene>
<keyword id="KW-0687">Ribonucleoprotein</keyword>
<keyword id="KW-0689">Ribosomal protein</keyword>
<keyword id="KW-0694">RNA-binding</keyword>
<keyword id="KW-0699">rRNA-binding</keyword>
<protein>
    <recommendedName>
        <fullName evidence="1">Large ribosomal subunit protein uL15</fullName>
    </recommendedName>
    <alternativeName>
        <fullName evidence="3">50S ribosomal protein L15</fullName>
    </alternativeName>
</protein>
<accession>C1DKN2</accession>
<proteinExistence type="inferred from homology"/>
<organism>
    <name type="scientific">Azotobacter vinelandii (strain DJ / ATCC BAA-1303)</name>
    <dbReference type="NCBI Taxonomy" id="322710"/>
    <lineage>
        <taxon>Bacteria</taxon>
        <taxon>Pseudomonadati</taxon>
        <taxon>Pseudomonadota</taxon>
        <taxon>Gammaproteobacteria</taxon>
        <taxon>Pseudomonadales</taxon>
        <taxon>Pseudomonadaceae</taxon>
        <taxon>Azotobacter</taxon>
    </lineage>
</organism>
<reference key="1">
    <citation type="journal article" date="2009" name="J. Bacteriol.">
        <title>Genome sequence of Azotobacter vinelandii, an obligate aerobe specialized to support diverse anaerobic metabolic processes.</title>
        <authorList>
            <person name="Setubal J.C."/>
            <person name="Dos Santos P."/>
            <person name="Goldman B.S."/>
            <person name="Ertesvaag H."/>
            <person name="Espin G."/>
            <person name="Rubio L.M."/>
            <person name="Valla S."/>
            <person name="Almeida N.F."/>
            <person name="Balasubramanian D."/>
            <person name="Cromes L."/>
            <person name="Curatti L."/>
            <person name="Du Z."/>
            <person name="Godsy E."/>
            <person name="Goodner B."/>
            <person name="Hellner-Burris K."/>
            <person name="Hernandez J.A."/>
            <person name="Houmiel K."/>
            <person name="Imperial J."/>
            <person name="Kennedy C."/>
            <person name="Larson T.J."/>
            <person name="Latreille P."/>
            <person name="Ligon L.S."/>
            <person name="Lu J."/>
            <person name="Maerk M."/>
            <person name="Miller N.M."/>
            <person name="Norton S."/>
            <person name="O'Carroll I.P."/>
            <person name="Paulsen I."/>
            <person name="Raulfs E.C."/>
            <person name="Roemer R."/>
            <person name="Rosser J."/>
            <person name="Segura D."/>
            <person name="Slater S."/>
            <person name="Stricklin S.L."/>
            <person name="Studholme D.J."/>
            <person name="Sun J."/>
            <person name="Viana C.J."/>
            <person name="Wallin E."/>
            <person name="Wang B."/>
            <person name="Wheeler C."/>
            <person name="Zhu H."/>
            <person name="Dean D.R."/>
            <person name="Dixon R."/>
            <person name="Wood D."/>
        </authorList>
    </citation>
    <scope>NUCLEOTIDE SEQUENCE [LARGE SCALE GENOMIC DNA]</scope>
    <source>
        <strain>DJ / ATCC BAA-1303</strain>
    </source>
</reference>
<evidence type="ECO:0000255" key="1">
    <source>
        <dbReference type="HAMAP-Rule" id="MF_01341"/>
    </source>
</evidence>
<evidence type="ECO:0000256" key="2">
    <source>
        <dbReference type="SAM" id="MobiDB-lite"/>
    </source>
</evidence>
<evidence type="ECO:0000305" key="3"/>
<comment type="function">
    <text evidence="1">Binds to the 23S rRNA.</text>
</comment>
<comment type="subunit">
    <text evidence="1">Part of the 50S ribosomal subunit.</text>
</comment>
<comment type="similarity">
    <text evidence="1">Belongs to the universal ribosomal protein uL15 family.</text>
</comment>
<dbReference type="EMBL" id="CP001157">
    <property type="protein sequence ID" value="ACO76895.1"/>
    <property type="molecule type" value="Genomic_DNA"/>
</dbReference>
<dbReference type="RefSeq" id="WP_012699321.1">
    <property type="nucleotide sequence ID" value="NC_012560.1"/>
</dbReference>
<dbReference type="SMR" id="C1DKN2"/>
<dbReference type="STRING" id="322710.Avin_06440"/>
<dbReference type="EnsemblBacteria" id="ACO76895">
    <property type="protein sequence ID" value="ACO76895"/>
    <property type="gene ID" value="Avin_06440"/>
</dbReference>
<dbReference type="GeneID" id="88184055"/>
<dbReference type="KEGG" id="avn:Avin_06440"/>
<dbReference type="eggNOG" id="COG0200">
    <property type="taxonomic scope" value="Bacteria"/>
</dbReference>
<dbReference type="HOGENOM" id="CLU_055188_4_2_6"/>
<dbReference type="OrthoDB" id="9810293at2"/>
<dbReference type="Proteomes" id="UP000002424">
    <property type="component" value="Chromosome"/>
</dbReference>
<dbReference type="GO" id="GO:0022625">
    <property type="term" value="C:cytosolic large ribosomal subunit"/>
    <property type="evidence" value="ECO:0007669"/>
    <property type="project" value="TreeGrafter"/>
</dbReference>
<dbReference type="GO" id="GO:0019843">
    <property type="term" value="F:rRNA binding"/>
    <property type="evidence" value="ECO:0007669"/>
    <property type="project" value="UniProtKB-UniRule"/>
</dbReference>
<dbReference type="GO" id="GO:0003735">
    <property type="term" value="F:structural constituent of ribosome"/>
    <property type="evidence" value="ECO:0007669"/>
    <property type="project" value="InterPro"/>
</dbReference>
<dbReference type="GO" id="GO:0006412">
    <property type="term" value="P:translation"/>
    <property type="evidence" value="ECO:0007669"/>
    <property type="project" value="UniProtKB-UniRule"/>
</dbReference>
<dbReference type="Gene3D" id="3.100.10.10">
    <property type="match status" value="1"/>
</dbReference>
<dbReference type="HAMAP" id="MF_01341">
    <property type="entry name" value="Ribosomal_uL15"/>
    <property type="match status" value="1"/>
</dbReference>
<dbReference type="InterPro" id="IPR030878">
    <property type="entry name" value="Ribosomal_uL15"/>
</dbReference>
<dbReference type="InterPro" id="IPR021131">
    <property type="entry name" value="Ribosomal_uL15/eL18"/>
</dbReference>
<dbReference type="InterPro" id="IPR036227">
    <property type="entry name" value="Ribosomal_uL15/eL18_sf"/>
</dbReference>
<dbReference type="InterPro" id="IPR005749">
    <property type="entry name" value="Ribosomal_uL15_bac-type"/>
</dbReference>
<dbReference type="InterPro" id="IPR001196">
    <property type="entry name" value="Ribosomal_uL15_CS"/>
</dbReference>
<dbReference type="NCBIfam" id="TIGR01071">
    <property type="entry name" value="rplO_bact"/>
    <property type="match status" value="1"/>
</dbReference>
<dbReference type="PANTHER" id="PTHR12934">
    <property type="entry name" value="50S RIBOSOMAL PROTEIN L15"/>
    <property type="match status" value="1"/>
</dbReference>
<dbReference type="PANTHER" id="PTHR12934:SF11">
    <property type="entry name" value="LARGE RIBOSOMAL SUBUNIT PROTEIN UL15M"/>
    <property type="match status" value="1"/>
</dbReference>
<dbReference type="Pfam" id="PF00828">
    <property type="entry name" value="Ribosomal_L27A"/>
    <property type="match status" value="1"/>
</dbReference>
<dbReference type="SUPFAM" id="SSF52080">
    <property type="entry name" value="Ribosomal proteins L15p and L18e"/>
    <property type="match status" value="1"/>
</dbReference>
<dbReference type="PROSITE" id="PS00475">
    <property type="entry name" value="RIBOSOMAL_L15"/>
    <property type="match status" value="1"/>
</dbReference>
<sequence>MQLNDLRSAPGARREKLRPGRGIGSGLGKTGGRGHKGQTSRSGGKIAPGFEGGQQPLHRRLPKFGFTSLKALDRAEIRTSELAKVEGDVVTLQALKDANLVNQGVRRVKVMLSGDVGRAVTLKGIAVTKGARAAIEAAGGKIED</sequence>
<feature type="chain" id="PRO_1000214695" description="Large ribosomal subunit protein uL15">
    <location>
        <begin position="1"/>
        <end position="144"/>
    </location>
</feature>
<feature type="region of interest" description="Disordered" evidence="2">
    <location>
        <begin position="1"/>
        <end position="58"/>
    </location>
</feature>
<feature type="compositionally biased region" description="Gly residues" evidence="2">
    <location>
        <begin position="21"/>
        <end position="31"/>
    </location>
</feature>
<name>RL15_AZOVD</name>